<organism>
    <name type="scientific">Syntrophomonas wolfei subsp. wolfei (strain DSM 2245B / Goettingen)</name>
    <dbReference type="NCBI Taxonomy" id="335541"/>
    <lineage>
        <taxon>Bacteria</taxon>
        <taxon>Bacillati</taxon>
        <taxon>Bacillota</taxon>
        <taxon>Clostridia</taxon>
        <taxon>Eubacteriales</taxon>
        <taxon>Syntrophomonadaceae</taxon>
        <taxon>Syntrophomonas</taxon>
    </lineage>
</organism>
<evidence type="ECO:0000255" key="1">
    <source>
        <dbReference type="HAMAP-Rule" id="MF_00086"/>
    </source>
</evidence>
<feature type="chain" id="PRO_0000302998" description="S-adenosylmethionine synthase">
    <location>
        <begin position="1"/>
        <end position="396"/>
    </location>
</feature>
<feature type="region of interest" description="Flexible loop" evidence="1">
    <location>
        <begin position="99"/>
        <end position="109"/>
    </location>
</feature>
<feature type="binding site" description="in other chain" evidence="1">
    <location>
        <position position="15"/>
    </location>
    <ligand>
        <name>ATP</name>
        <dbReference type="ChEBI" id="CHEBI:30616"/>
        <note>ligand shared between two neighboring subunits</note>
    </ligand>
</feature>
<feature type="binding site" evidence="1">
    <location>
        <position position="17"/>
    </location>
    <ligand>
        <name>Mg(2+)</name>
        <dbReference type="ChEBI" id="CHEBI:18420"/>
    </ligand>
</feature>
<feature type="binding site" evidence="1">
    <location>
        <position position="43"/>
    </location>
    <ligand>
        <name>K(+)</name>
        <dbReference type="ChEBI" id="CHEBI:29103"/>
    </ligand>
</feature>
<feature type="binding site" description="in other chain" evidence="1">
    <location>
        <position position="56"/>
    </location>
    <ligand>
        <name>L-methionine</name>
        <dbReference type="ChEBI" id="CHEBI:57844"/>
        <note>ligand shared between two neighboring subunits</note>
    </ligand>
</feature>
<feature type="binding site" description="in other chain" evidence="1">
    <location>
        <position position="99"/>
    </location>
    <ligand>
        <name>L-methionine</name>
        <dbReference type="ChEBI" id="CHEBI:57844"/>
        <note>ligand shared between two neighboring subunits</note>
    </ligand>
</feature>
<feature type="binding site" description="in other chain" evidence="1">
    <location>
        <begin position="175"/>
        <end position="177"/>
    </location>
    <ligand>
        <name>ATP</name>
        <dbReference type="ChEBI" id="CHEBI:30616"/>
        <note>ligand shared between two neighboring subunits</note>
    </ligand>
</feature>
<feature type="binding site" description="in other chain" evidence="1">
    <location>
        <begin position="241"/>
        <end position="242"/>
    </location>
    <ligand>
        <name>ATP</name>
        <dbReference type="ChEBI" id="CHEBI:30616"/>
        <note>ligand shared between two neighboring subunits</note>
    </ligand>
</feature>
<feature type="binding site" evidence="1">
    <location>
        <position position="250"/>
    </location>
    <ligand>
        <name>ATP</name>
        <dbReference type="ChEBI" id="CHEBI:30616"/>
        <note>ligand shared between two neighboring subunits</note>
    </ligand>
</feature>
<feature type="binding site" evidence="1">
    <location>
        <position position="250"/>
    </location>
    <ligand>
        <name>L-methionine</name>
        <dbReference type="ChEBI" id="CHEBI:57844"/>
        <note>ligand shared between two neighboring subunits</note>
    </ligand>
</feature>
<feature type="binding site" description="in other chain" evidence="1">
    <location>
        <begin position="256"/>
        <end position="257"/>
    </location>
    <ligand>
        <name>ATP</name>
        <dbReference type="ChEBI" id="CHEBI:30616"/>
        <note>ligand shared between two neighboring subunits</note>
    </ligand>
</feature>
<feature type="binding site" evidence="1">
    <location>
        <position position="273"/>
    </location>
    <ligand>
        <name>ATP</name>
        <dbReference type="ChEBI" id="CHEBI:30616"/>
        <note>ligand shared between two neighboring subunits</note>
    </ligand>
</feature>
<feature type="binding site" evidence="1">
    <location>
        <position position="277"/>
    </location>
    <ligand>
        <name>ATP</name>
        <dbReference type="ChEBI" id="CHEBI:30616"/>
        <note>ligand shared between two neighboring subunits</note>
    </ligand>
</feature>
<feature type="binding site" description="in other chain" evidence="1">
    <location>
        <position position="281"/>
    </location>
    <ligand>
        <name>L-methionine</name>
        <dbReference type="ChEBI" id="CHEBI:57844"/>
        <note>ligand shared between two neighboring subunits</note>
    </ligand>
</feature>
<protein>
    <recommendedName>
        <fullName evidence="1">S-adenosylmethionine synthase</fullName>
        <shortName evidence="1">AdoMet synthase</shortName>
        <ecNumber evidence="1">2.5.1.6</ecNumber>
    </recommendedName>
    <alternativeName>
        <fullName evidence="1">MAT</fullName>
    </alternativeName>
    <alternativeName>
        <fullName evidence="1">Methionine adenosyltransferase</fullName>
    </alternativeName>
</protein>
<dbReference type="EC" id="2.5.1.6" evidence="1"/>
<dbReference type="EMBL" id="CP000448">
    <property type="protein sequence ID" value="ABI68543.1"/>
    <property type="molecule type" value="Genomic_DNA"/>
</dbReference>
<dbReference type="RefSeq" id="WP_011640646.1">
    <property type="nucleotide sequence ID" value="NC_008346.1"/>
</dbReference>
<dbReference type="SMR" id="Q0AXL1"/>
<dbReference type="STRING" id="335541.Swol_1234"/>
<dbReference type="KEGG" id="swo:Swol_1234"/>
<dbReference type="eggNOG" id="COG0192">
    <property type="taxonomic scope" value="Bacteria"/>
</dbReference>
<dbReference type="HOGENOM" id="CLU_041802_1_1_9"/>
<dbReference type="UniPathway" id="UPA00315">
    <property type="reaction ID" value="UER00080"/>
</dbReference>
<dbReference type="Proteomes" id="UP000001968">
    <property type="component" value="Chromosome"/>
</dbReference>
<dbReference type="GO" id="GO:0005737">
    <property type="term" value="C:cytoplasm"/>
    <property type="evidence" value="ECO:0007669"/>
    <property type="project" value="UniProtKB-SubCell"/>
</dbReference>
<dbReference type="GO" id="GO:0005524">
    <property type="term" value="F:ATP binding"/>
    <property type="evidence" value="ECO:0007669"/>
    <property type="project" value="UniProtKB-UniRule"/>
</dbReference>
<dbReference type="GO" id="GO:0000287">
    <property type="term" value="F:magnesium ion binding"/>
    <property type="evidence" value="ECO:0007669"/>
    <property type="project" value="UniProtKB-UniRule"/>
</dbReference>
<dbReference type="GO" id="GO:0004478">
    <property type="term" value="F:methionine adenosyltransferase activity"/>
    <property type="evidence" value="ECO:0007669"/>
    <property type="project" value="UniProtKB-UniRule"/>
</dbReference>
<dbReference type="GO" id="GO:0006730">
    <property type="term" value="P:one-carbon metabolic process"/>
    <property type="evidence" value="ECO:0007669"/>
    <property type="project" value="UniProtKB-KW"/>
</dbReference>
<dbReference type="GO" id="GO:0006556">
    <property type="term" value="P:S-adenosylmethionine biosynthetic process"/>
    <property type="evidence" value="ECO:0007669"/>
    <property type="project" value="UniProtKB-UniRule"/>
</dbReference>
<dbReference type="CDD" id="cd18079">
    <property type="entry name" value="S-AdoMet_synt"/>
    <property type="match status" value="1"/>
</dbReference>
<dbReference type="FunFam" id="3.30.300.10:FF:000003">
    <property type="entry name" value="S-adenosylmethionine synthase"/>
    <property type="match status" value="1"/>
</dbReference>
<dbReference type="FunFam" id="3.30.300.10:FF:000004">
    <property type="entry name" value="S-adenosylmethionine synthase"/>
    <property type="match status" value="1"/>
</dbReference>
<dbReference type="Gene3D" id="3.30.300.10">
    <property type="match status" value="3"/>
</dbReference>
<dbReference type="HAMAP" id="MF_00086">
    <property type="entry name" value="S_AdoMet_synth1"/>
    <property type="match status" value="1"/>
</dbReference>
<dbReference type="InterPro" id="IPR022631">
    <property type="entry name" value="ADOMET_SYNTHASE_CS"/>
</dbReference>
<dbReference type="InterPro" id="IPR022630">
    <property type="entry name" value="S-AdoMet_synt_C"/>
</dbReference>
<dbReference type="InterPro" id="IPR022629">
    <property type="entry name" value="S-AdoMet_synt_central"/>
</dbReference>
<dbReference type="InterPro" id="IPR022628">
    <property type="entry name" value="S-AdoMet_synt_N"/>
</dbReference>
<dbReference type="InterPro" id="IPR002133">
    <property type="entry name" value="S-AdoMet_synthetase"/>
</dbReference>
<dbReference type="InterPro" id="IPR022636">
    <property type="entry name" value="S-AdoMet_synthetase_sfam"/>
</dbReference>
<dbReference type="NCBIfam" id="TIGR01034">
    <property type="entry name" value="metK"/>
    <property type="match status" value="1"/>
</dbReference>
<dbReference type="PANTHER" id="PTHR11964">
    <property type="entry name" value="S-ADENOSYLMETHIONINE SYNTHETASE"/>
    <property type="match status" value="1"/>
</dbReference>
<dbReference type="Pfam" id="PF02773">
    <property type="entry name" value="S-AdoMet_synt_C"/>
    <property type="match status" value="1"/>
</dbReference>
<dbReference type="Pfam" id="PF02772">
    <property type="entry name" value="S-AdoMet_synt_M"/>
    <property type="match status" value="1"/>
</dbReference>
<dbReference type="Pfam" id="PF00438">
    <property type="entry name" value="S-AdoMet_synt_N"/>
    <property type="match status" value="1"/>
</dbReference>
<dbReference type="PIRSF" id="PIRSF000497">
    <property type="entry name" value="MAT"/>
    <property type="match status" value="1"/>
</dbReference>
<dbReference type="SUPFAM" id="SSF55973">
    <property type="entry name" value="S-adenosylmethionine synthetase"/>
    <property type="match status" value="3"/>
</dbReference>
<dbReference type="PROSITE" id="PS00376">
    <property type="entry name" value="ADOMET_SYNTHASE_1"/>
    <property type="match status" value="1"/>
</dbReference>
<dbReference type="PROSITE" id="PS00377">
    <property type="entry name" value="ADOMET_SYNTHASE_2"/>
    <property type="match status" value="1"/>
</dbReference>
<gene>
    <name evidence="1" type="primary">metK</name>
    <name type="ordered locus">Swol_1234</name>
</gene>
<name>METK_SYNWW</name>
<reference key="1">
    <citation type="journal article" date="2010" name="Environ. Microbiol.">
        <title>The genome of Syntrophomonas wolfei: new insights into syntrophic metabolism and biohydrogen production.</title>
        <authorList>
            <person name="Sieber J.R."/>
            <person name="Sims D.R."/>
            <person name="Han C."/>
            <person name="Kim E."/>
            <person name="Lykidis A."/>
            <person name="Lapidus A.L."/>
            <person name="McDonnald E."/>
            <person name="Rohlin L."/>
            <person name="Culley D.E."/>
            <person name="Gunsalus R."/>
            <person name="McInerney M.J."/>
        </authorList>
    </citation>
    <scope>NUCLEOTIDE SEQUENCE [LARGE SCALE GENOMIC DNA]</scope>
    <source>
        <strain>DSM 2245B / Goettingen</strain>
    </source>
</reference>
<comment type="function">
    <text evidence="1">Catalyzes the formation of S-adenosylmethionine (AdoMet) from methionine and ATP. The overall synthetic reaction is composed of two sequential steps, AdoMet formation and the subsequent tripolyphosphate hydrolysis which occurs prior to release of AdoMet from the enzyme.</text>
</comment>
<comment type="catalytic activity">
    <reaction evidence="1">
        <text>L-methionine + ATP + H2O = S-adenosyl-L-methionine + phosphate + diphosphate</text>
        <dbReference type="Rhea" id="RHEA:21080"/>
        <dbReference type="ChEBI" id="CHEBI:15377"/>
        <dbReference type="ChEBI" id="CHEBI:30616"/>
        <dbReference type="ChEBI" id="CHEBI:33019"/>
        <dbReference type="ChEBI" id="CHEBI:43474"/>
        <dbReference type="ChEBI" id="CHEBI:57844"/>
        <dbReference type="ChEBI" id="CHEBI:59789"/>
        <dbReference type="EC" id="2.5.1.6"/>
    </reaction>
</comment>
<comment type="cofactor">
    <cofactor evidence="1">
        <name>Mg(2+)</name>
        <dbReference type="ChEBI" id="CHEBI:18420"/>
    </cofactor>
    <text evidence="1">Binds 2 divalent ions per subunit.</text>
</comment>
<comment type="cofactor">
    <cofactor evidence="1">
        <name>K(+)</name>
        <dbReference type="ChEBI" id="CHEBI:29103"/>
    </cofactor>
    <text evidence="1">Binds 1 potassium ion per subunit.</text>
</comment>
<comment type="pathway">
    <text evidence="1">Amino-acid biosynthesis; S-adenosyl-L-methionine biosynthesis; S-adenosyl-L-methionine from L-methionine: step 1/1.</text>
</comment>
<comment type="subunit">
    <text evidence="1">Homotetramer; dimer of dimers.</text>
</comment>
<comment type="subcellular location">
    <subcellularLocation>
        <location evidence="1">Cytoplasm</location>
    </subcellularLocation>
</comment>
<comment type="similarity">
    <text evidence="1">Belongs to the AdoMet synthase family.</text>
</comment>
<keyword id="KW-0067">ATP-binding</keyword>
<keyword id="KW-0963">Cytoplasm</keyword>
<keyword id="KW-0460">Magnesium</keyword>
<keyword id="KW-0479">Metal-binding</keyword>
<keyword id="KW-0547">Nucleotide-binding</keyword>
<keyword id="KW-0554">One-carbon metabolism</keyword>
<keyword id="KW-0630">Potassium</keyword>
<keyword id="KW-1185">Reference proteome</keyword>
<keyword id="KW-0808">Transferase</keyword>
<sequence length="396" mass="43261">MARTLFTSESVTEGHPDKVADQISDAILDAIMELDPYGRVAAETIVTTGLVLVAGEITTNCYVDIPRLVRSTIEDIGYTRAKYGFDAETCAVLTSLDEQSGDIALGVDRAFEAKKGEMDDKELDAIGAGDQGMMFGYASNETAVLMPMPIYLASKMAERLGEVRKEGIIPYLRPDGKTQVTVEYEDYKPLRVTTVVVSAQHHPEVSSATIEKDIIEHVIKAVIPPEMIDAHTIFYVNPTGRFVIGGPQGDSGLTGRKIIVDTYGGMARHGGGAFSGKDPTKVDRSASYMLRYVAKNIVAAGLAERCEIQVAYAIGVANPLSINVNTFGTGKISDDKIIELIKKNFDLRPAAIIRDLDLRRPIYRKTAAYGHFGREDAEFTWERTDKADTLREQAGL</sequence>
<accession>Q0AXL1</accession>
<proteinExistence type="inferred from homology"/>